<organism>
    <name type="scientific">Yersinia pseudotuberculosis serotype I (strain IP32953)</name>
    <dbReference type="NCBI Taxonomy" id="273123"/>
    <lineage>
        <taxon>Bacteria</taxon>
        <taxon>Pseudomonadati</taxon>
        <taxon>Pseudomonadota</taxon>
        <taxon>Gammaproteobacteria</taxon>
        <taxon>Enterobacterales</taxon>
        <taxon>Yersiniaceae</taxon>
        <taxon>Yersinia</taxon>
    </lineage>
</organism>
<feature type="chain" id="PRO_0000234623" description="Sulfurtransferase TusE">
    <location>
        <begin position="1"/>
        <end position="108"/>
    </location>
</feature>
<feature type="active site" description="Cysteine persulfide intermediate" evidence="1">
    <location>
        <position position="107"/>
    </location>
</feature>
<protein>
    <recommendedName>
        <fullName>Sulfurtransferase TusE</fullName>
        <ecNumber>2.8.1.-</ecNumber>
    </recommendedName>
    <alternativeName>
        <fullName>tRNA 2-thiouridine synthesizing protein E</fullName>
    </alternativeName>
</protein>
<reference key="1">
    <citation type="journal article" date="2004" name="Proc. Natl. Acad. Sci. U.S.A.">
        <title>Insights into the evolution of Yersinia pestis through whole-genome comparison with Yersinia pseudotuberculosis.</title>
        <authorList>
            <person name="Chain P.S.G."/>
            <person name="Carniel E."/>
            <person name="Larimer F.W."/>
            <person name="Lamerdin J."/>
            <person name="Stoutland P.O."/>
            <person name="Regala W.M."/>
            <person name="Georgescu A.M."/>
            <person name="Vergez L.M."/>
            <person name="Land M.L."/>
            <person name="Motin V.L."/>
            <person name="Brubaker R.R."/>
            <person name="Fowler J."/>
            <person name="Hinnebusch J."/>
            <person name="Marceau M."/>
            <person name="Medigue C."/>
            <person name="Simonet M."/>
            <person name="Chenal-Francisque V."/>
            <person name="Souza B."/>
            <person name="Dacheux D."/>
            <person name="Elliott J.M."/>
            <person name="Derbise A."/>
            <person name="Hauser L.J."/>
            <person name="Garcia E."/>
        </authorList>
    </citation>
    <scope>NUCLEOTIDE SEQUENCE [LARGE SCALE GENOMIC DNA]</scope>
    <source>
        <strain>IP32953</strain>
    </source>
</reference>
<sequence length="108" mass="12281">MEFEGRIIDTDAQGYLKNSTDWSEALAPVLAEQEGITLTEPHWEVVRFVRAFYQEFNTSPAIRMLVKAMAQKYGEEKGNSRYLYRLFPKGPAKQATKIAGLPKPVKCI</sequence>
<gene>
    <name type="primary">tusE</name>
    <name type="ordered locus">YPTB1465</name>
</gene>
<comment type="function">
    <text evidence="1">Part of a sulfur-relay system required for 2-thiolation of 5-methylaminomethyl-2-thiouridine (mnm(5)s(2)U) at tRNA wobble positions. Could accept sulfur from TusD (By similarity).</text>
</comment>
<comment type="subunit">
    <text evidence="1">Interacts with the TusBCD complex. Interacts with MnmA (By similarity).</text>
</comment>
<comment type="subcellular location">
    <subcellularLocation>
        <location evidence="1">Cytoplasm</location>
    </subcellularLocation>
</comment>
<comment type="similarity">
    <text evidence="2">Belongs to the DsrC/TusE family.</text>
</comment>
<keyword id="KW-0963">Cytoplasm</keyword>
<keyword id="KW-0808">Transferase</keyword>
<keyword id="KW-0819">tRNA processing</keyword>
<evidence type="ECO:0000250" key="1"/>
<evidence type="ECO:0000305" key="2"/>
<proteinExistence type="inferred from homology"/>
<name>TUSE_YERPS</name>
<dbReference type="EC" id="2.8.1.-"/>
<dbReference type="EMBL" id="BX936398">
    <property type="protein sequence ID" value="CAH20705.1"/>
    <property type="molecule type" value="Genomic_DNA"/>
</dbReference>
<dbReference type="SMR" id="Q66CD8"/>
<dbReference type="KEGG" id="yps:YPTB1465"/>
<dbReference type="Proteomes" id="UP000001011">
    <property type="component" value="Chromosome"/>
</dbReference>
<dbReference type="GO" id="GO:0005737">
    <property type="term" value="C:cytoplasm"/>
    <property type="evidence" value="ECO:0007669"/>
    <property type="project" value="UniProtKB-SubCell"/>
</dbReference>
<dbReference type="GO" id="GO:0097163">
    <property type="term" value="F:sulfur carrier activity"/>
    <property type="evidence" value="ECO:0007669"/>
    <property type="project" value="TreeGrafter"/>
</dbReference>
<dbReference type="GO" id="GO:0016740">
    <property type="term" value="F:transferase activity"/>
    <property type="evidence" value="ECO:0007669"/>
    <property type="project" value="UniProtKB-KW"/>
</dbReference>
<dbReference type="GO" id="GO:0002143">
    <property type="term" value="P:tRNA wobble position uridine thiolation"/>
    <property type="evidence" value="ECO:0007669"/>
    <property type="project" value="TreeGrafter"/>
</dbReference>
<dbReference type="FunFam" id="1.10.10.370:FF:000001">
    <property type="entry name" value="Sulfurtransferase"/>
    <property type="match status" value="1"/>
</dbReference>
<dbReference type="FunFam" id="3.30.1420.10:FF:000001">
    <property type="entry name" value="Sulfurtransferase"/>
    <property type="match status" value="1"/>
</dbReference>
<dbReference type="Gene3D" id="3.30.1420.10">
    <property type="match status" value="1"/>
</dbReference>
<dbReference type="Gene3D" id="1.10.10.370">
    <property type="entry name" value="DsrC-like protein, C-terminal domain"/>
    <property type="match status" value="1"/>
</dbReference>
<dbReference type="InterPro" id="IPR042072">
    <property type="entry name" value="DsrC-like_C"/>
</dbReference>
<dbReference type="InterPro" id="IPR025526">
    <property type="entry name" value="DsrC-like_dom_sf"/>
</dbReference>
<dbReference type="InterPro" id="IPR043163">
    <property type="entry name" value="DsrC-like_N"/>
</dbReference>
<dbReference type="InterPro" id="IPR007453">
    <property type="entry name" value="DsrC/TusE"/>
</dbReference>
<dbReference type="NCBIfam" id="TIGR03342">
    <property type="entry name" value="dsrC_tusE_dsvC"/>
    <property type="match status" value="1"/>
</dbReference>
<dbReference type="NCBIfam" id="NF008562">
    <property type="entry name" value="PRK11508.1"/>
    <property type="match status" value="1"/>
</dbReference>
<dbReference type="PANTHER" id="PTHR37010">
    <property type="entry name" value="SULFURTRANSFERASE TUSE"/>
    <property type="match status" value="1"/>
</dbReference>
<dbReference type="PANTHER" id="PTHR37010:SF1">
    <property type="entry name" value="SULFURTRANSFERASE TUSE"/>
    <property type="match status" value="1"/>
</dbReference>
<dbReference type="Pfam" id="PF04358">
    <property type="entry name" value="DsrC"/>
    <property type="match status" value="1"/>
</dbReference>
<dbReference type="PIRSF" id="PIRSF006223">
    <property type="entry name" value="DsrC_TusE"/>
    <property type="match status" value="1"/>
</dbReference>
<dbReference type="SUPFAM" id="SSF69721">
    <property type="entry name" value="DsrC, the gamma subunit of dissimilatory sulfite reductase"/>
    <property type="match status" value="1"/>
</dbReference>
<accession>Q66CD8</accession>